<sequence>MTDQADTAMPIQFTDAAAAKVKGLLEEEQNPALKLRVYVTGGGCSGFQYGFTFDEKVNDGDFTIEKQGVLLVVDPMSLQYLVGGEVDYTSGLEGSRFFVKNPNATTTCGCGASFSV</sequence>
<keyword id="KW-0408">Iron</keyword>
<keyword id="KW-0411">Iron-sulfur</keyword>
<keyword id="KW-0479">Metal-binding</keyword>
<feature type="chain" id="PRO_0000311549" description="Iron-sulfur cluster insertion protein ErpA">
    <location>
        <begin position="1"/>
        <end position="116"/>
    </location>
</feature>
<feature type="binding site" evidence="1">
    <location>
        <position position="44"/>
    </location>
    <ligand>
        <name>iron-sulfur cluster</name>
        <dbReference type="ChEBI" id="CHEBI:30408"/>
    </ligand>
</feature>
<feature type="binding site" evidence="1">
    <location>
        <position position="108"/>
    </location>
    <ligand>
        <name>iron-sulfur cluster</name>
        <dbReference type="ChEBI" id="CHEBI:30408"/>
    </ligand>
</feature>
<feature type="binding site" evidence="1">
    <location>
        <position position="110"/>
    </location>
    <ligand>
        <name>iron-sulfur cluster</name>
        <dbReference type="ChEBI" id="CHEBI:30408"/>
    </ligand>
</feature>
<proteinExistence type="inferred from homology"/>
<name>ERPA_SHEB8</name>
<accession>A6WKM0</accession>
<protein>
    <recommendedName>
        <fullName evidence="1">Iron-sulfur cluster insertion protein ErpA</fullName>
    </recommendedName>
</protein>
<gene>
    <name evidence="1" type="primary">erpA</name>
    <name type="ordered locus">Shew185_1208</name>
</gene>
<comment type="function">
    <text evidence="1">Required for insertion of 4Fe-4S clusters for at least IspG.</text>
</comment>
<comment type="cofactor">
    <cofactor evidence="1">
        <name>iron-sulfur cluster</name>
        <dbReference type="ChEBI" id="CHEBI:30408"/>
    </cofactor>
    <text evidence="1">Binds 1 iron-sulfur cluster per subunit.</text>
</comment>
<comment type="subunit">
    <text evidence="1">Homodimer.</text>
</comment>
<comment type="similarity">
    <text evidence="1">Belongs to the HesB/IscA family.</text>
</comment>
<dbReference type="EMBL" id="CP000753">
    <property type="protein sequence ID" value="ABS07359.1"/>
    <property type="molecule type" value="Genomic_DNA"/>
</dbReference>
<dbReference type="RefSeq" id="WP_006080742.1">
    <property type="nucleotide sequence ID" value="NC_009665.1"/>
</dbReference>
<dbReference type="SMR" id="A6WKM0"/>
<dbReference type="GeneID" id="11771515"/>
<dbReference type="KEGG" id="sbm:Shew185_1208"/>
<dbReference type="HOGENOM" id="CLU_069054_5_3_6"/>
<dbReference type="GO" id="GO:0005829">
    <property type="term" value="C:cytosol"/>
    <property type="evidence" value="ECO:0007669"/>
    <property type="project" value="TreeGrafter"/>
</dbReference>
<dbReference type="GO" id="GO:0051537">
    <property type="term" value="F:2 iron, 2 sulfur cluster binding"/>
    <property type="evidence" value="ECO:0007669"/>
    <property type="project" value="UniProtKB-ARBA"/>
</dbReference>
<dbReference type="GO" id="GO:0051539">
    <property type="term" value="F:4 iron, 4 sulfur cluster binding"/>
    <property type="evidence" value="ECO:0007669"/>
    <property type="project" value="TreeGrafter"/>
</dbReference>
<dbReference type="GO" id="GO:0005506">
    <property type="term" value="F:iron ion binding"/>
    <property type="evidence" value="ECO:0007669"/>
    <property type="project" value="UniProtKB-UniRule"/>
</dbReference>
<dbReference type="GO" id="GO:0016226">
    <property type="term" value="P:iron-sulfur cluster assembly"/>
    <property type="evidence" value="ECO:0007669"/>
    <property type="project" value="UniProtKB-UniRule"/>
</dbReference>
<dbReference type="FunFam" id="2.60.300.12:FF:000002">
    <property type="entry name" value="Iron-sulfur cluster insertion protein ErpA"/>
    <property type="match status" value="1"/>
</dbReference>
<dbReference type="Gene3D" id="2.60.300.12">
    <property type="entry name" value="HesB-like domain"/>
    <property type="match status" value="1"/>
</dbReference>
<dbReference type="HAMAP" id="MF_01380">
    <property type="entry name" value="Fe_S_insert_ErpA"/>
    <property type="match status" value="1"/>
</dbReference>
<dbReference type="InterPro" id="IPR000361">
    <property type="entry name" value="FeS_biogenesis"/>
</dbReference>
<dbReference type="InterPro" id="IPR016092">
    <property type="entry name" value="FeS_cluster_insertion"/>
</dbReference>
<dbReference type="InterPro" id="IPR017870">
    <property type="entry name" value="FeS_cluster_insertion_CS"/>
</dbReference>
<dbReference type="InterPro" id="IPR023063">
    <property type="entry name" value="FeS_cluster_insertion_RrpA"/>
</dbReference>
<dbReference type="InterPro" id="IPR035903">
    <property type="entry name" value="HesB-like_dom_sf"/>
</dbReference>
<dbReference type="NCBIfam" id="TIGR00049">
    <property type="entry name" value="iron-sulfur cluster assembly accessory protein"/>
    <property type="match status" value="1"/>
</dbReference>
<dbReference type="NCBIfam" id="NF010147">
    <property type="entry name" value="PRK13623.1"/>
    <property type="match status" value="1"/>
</dbReference>
<dbReference type="PANTHER" id="PTHR43011">
    <property type="entry name" value="IRON-SULFUR CLUSTER ASSEMBLY 2 HOMOLOG, MITOCHONDRIAL"/>
    <property type="match status" value="1"/>
</dbReference>
<dbReference type="PANTHER" id="PTHR43011:SF1">
    <property type="entry name" value="IRON-SULFUR CLUSTER ASSEMBLY 2 HOMOLOG, MITOCHONDRIAL"/>
    <property type="match status" value="1"/>
</dbReference>
<dbReference type="Pfam" id="PF01521">
    <property type="entry name" value="Fe-S_biosyn"/>
    <property type="match status" value="1"/>
</dbReference>
<dbReference type="SUPFAM" id="SSF89360">
    <property type="entry name" value="HesB-like domain"/>
    <property type="match status" value="1"/>
</dbReference>
<dbReference type="PROSITE" id="PS01152">
    <property type="entry name" value="HESB"/>
    <property type="match status" value="1"/>
</dbReference>
<evidence type="ECO:0000255" key="1">
    <source>
        <dbReference type="HAMAP-Rule" id="MF_01380"/>
    </source>
</evidence>
<reference key="1">
    <citation type="submission" date="2007-07" db="EMBL/GenBank/DDBJ databases">
        <title>Complete sequence of chromosome of Shewanella baltica OS185.</title>
        <authorList>
            <consortium name="US DOE Joint Genome Institute"/>
            <person name="Copeland A."/>
            <person name="Lucas S."/>
            <person name="Lapidus A."/>
            <person name="Barry K."/>
            <person name="Glavina del Rio T."/>
            <person name="Dalin E."/>
            <person name="Tice H."/>
            <person name="Pitluck S."/>
            <person name="Sims D."/>
            <person name="Brettin T."/>
            <person name="Bruce D."/>
            <person name="Detter J.C."/>
            <person name="Han C."/>
            <person name="Schmutz J."/>
            <person name="Larimer F."/>
            <person name="Land M."/>
            <person name="Hauser L."/>
            <person name="Kyrpides N."/>
            <person name="Mikhailova N."/>
            <person name="Brettar I."/>
            <person name="Rodrigues J."/>
            <person name="Konstantinidis K."/>
            <person name="Tiedje J."/>
            <person name="Richardson P."/>
        </authorList>
    </citation>
    <scope>NUCLEOTIDE SEQUENCE [LARGE SCALE GENOMIC DNA]</scope>
    <source>
        <strain>OS185</strain>
    </source>
</reference>
<organism>
    <name type="scientific">Shewanella baltica (strain OS185)</name>
    <dbReference type="NCBI Taxonomy" id="402882"/>
    <lineage>
        <taxon>Bacteria</taxon>
        <taxon>Pseudomonadati</taxon>
        <taxon>Pseudomonadota</taxon>
        <taxon>Gammaproteobacteria</taxon>
        <taxon>Alteromonadales</taxon>
        <taxon>Shewanellaceae</taxon>
        <taxon>Shewanella</taxon>
    </lineage>
</organism>